<proteinExistence type="inferred from homology"/>
<evidence type="ECO:0000255" key="1">
    <source>
        <dbReference type="HAMAP-Rule" id="MF_00182"/>
    </source>
</evidence>
<accession>Q48S21</accession>
<organism>
    <name type="scientific">Streptococcus pyogenes serotype M28 (strain MGAS6180)</name>
    <dbReference type="NCBI Taxonomy" id="319701"/>
    <lineage>
        <taxon>Bacteria</taxon>
        <taxon>Bacillati</taxon>
        <taxon>Bacillota</taxon>
        <taxon>Bacilli</taxon>
        <taxon>Lactobacillales</taxon>
        <taxon>Streptococcaceae</taxon>
        <taxon>Streptococcus</taxon>
    </lineage>
</organism>
<protein>
    <recommendedName>
        <fullName evidence="1">Methionyl-tRNA formyltransferase</fullName>
        <ecNumber evidence="1">2.1.2.9</ecNumber>
    </recommendedName>
</protein>
<keyword id="KW-0648">Protein biosynthesis</keyword>
<keyword id="KW-0808">Transferase</keyword>
<sequence length="311" mass="33694">MIKLLFMGTPQFSATVLKGLLDNPAYEILGVVTQPDRAVGRKKDIKVTPVKQLALEHGISIYQPEKLSGSQELIEIMELGADGIITAAFGQFLPTILLDSVSFAINVHASLLPKYRGGAPIHYAIMNGDKEAGVTIMEMIKEMDAGDMVAKASTPILETDNVGTLFEKLAIIGRDLLLDSLPAYLSGELKPIPQDHSQATFSPNISPEQEKLDWTMSDQEVFNHIRGMNPWPVAHTFLEGQRLKIYEAQLAEGEGLPGQVIVKTKKSLVIAAGQGALSLLVVQPAGKPKMAIADFLNGLGRKLEVGDFIGR</sequence>
<name>FMT_STRPM</name>
<gene>
    <name evidence="1" type="primary">fmt</name>
    <name type="ordered locus">M28_Spy1379</name>
</gene>
<feature type="chain" id="PRO_1000020182" description="Methionyl-tRNA formyltransferase">
    <location>
        <begin position="1"/>
        <end position="311"/>
    </location>
</feature>
<feature type="binding site" evidence="1">
    <location>
        <begin position="110"/>
        <end position="113"/>
    </location>
    <ligand>
        <name>(6S)-5,6,7,8-tetrahydrofolate</name>
        <dbReference type="ChEBI" id="CHEBI:57453"/>
    </ligand>
</feature>
<dbReference type="EC" id="2.1.2.9" evidence="1"/>
<dbReference type="EMBL" id="CP000056">
    <property type="protein sequence ID" value="AAX72489.1"/>
    <property type="molecule type" value="Genomic_DNA"/>
</dbReference>
<dbReference type="RefSeq" id="WP_011285049.1">
    <property type="nucleotide sequence ID" value="NC_007296.2"/>
</dbReference>
<dbReference type="SMR" id="Q48S21"/>
<dbReference type="KEGG" id="spb:M28_Spy1379"/>
<dbReference type="HOGENOM" id="CLU_033347_1_1_9"/>
<dbReference type="GO" id="GO:0005829">
    <property type="term" value="C:cytosol"/>
    <property type="evidence" value="ECO:0007669"/>
    <property type="project" value="TreeGrafter"/>
</dbReference>
<dbReference type="GO" id="GO:0004479">
    <property type="term" value="F:methionyl-tRNA formyltransferase activity"/>
    <property type="evidence" value="ECO:0007669"/>
    <property type="project" value="UniProtKB-UniRule"/>
</dbReference>
<dbReference type="CDD" id="cd08646">
    <property type="entry name" value="FMT_core_Met-tRNA-FMT_N"/>
    <property type="match status" value="1"/>
</dbReference>
<dbReference type="CDD" id="cd08704">
    <property type="entry name" value="Met_tRNA_FMT_C"/>
    <property type="match status" value="1"/>
</dbReference>
<dbReference type="FunFam" id="3.40.50.170:FF:000004">
    <property type="entry name" value="Methionyl-tRNA formyltransferase"/>
    <property type="match status" value="1"/>
</dbReference>
<dbReference type="Gene3D" id="3.10.25.10">
    <property type="entry name" value="Formyl transferase, C-terminal domain"/>
    <property type="match status" value="1"/>
</dbReference>
<dbReference type="Gene3D" id="3.40.50.170">
    <property type="entry name" value="Formyl transferase, N-terminal domain"/>
    <property type="match status" value="1"/>
</dbReference>
<dbReference type="HAMAP" id="MF_00182">
    <property type="entry name" value="Formyl_trans"/>
    <property type="match status" value="1"/>
</dbReference>
<dbReference type="InterPro" id="IPR005794">
    <property type="entry name" value="Fmt"/>
</dbReference>
<dbReference type="InterPro" id="IPR005793">
    <property type="entry name" value="Formyl_trans_C"/>
</dbReference>
<dbReference type="InterPro" id="IPR037022">
    <property type="entry name" value="Formyl_trans_C_sf"/>
</dbReference>
<dbReference type="InterPro" id="IPR002376">
    <property type="entry name" value="Formyl_transf_N"/>
</dbReference>
<dbReference type="InterPro" id="IPR036477">
    <property type="entry name" value="Formyl_transf_N_sf"/>
</dbReference>
<dbReference type="InterPro" id="IPR011034">
    <property type="entry name" value="Formyl_transferase-like_C_sf"/>
</dbReference>
<dbReference type="InterPro" id="IPR001555">
    <property type="entry name" value="GART_AS"/>
</dbReference>
<dbReference type="InterPro" id="IPR044135">
    <property type="entry name" value="Met-tRNA-FMT_C"/>
</dbReference>
<dbReference type="InterPro" id="IPR041711">
    <property type="entry name" value="Met-tRNA-FMT_N"/>
</dbReference>
<dbReference type="NCBIfam" id="TIGR00460">
    <property type="entry name" value="fmt"/>
    <property type="match status" value="1"/>
</dbReference>
<dbReference type="PANTHER" id="PTHR11138">
    <property type="entry name" value="METHIONYL-TRNA FORMYLTRANSFERASE"/>
    <property type="match status" value="1"/>
</dbReference>
<dbReference type="PANTHER" id="PTHR11138:SF5">
    <property type="entry name" value="METHIONYL-TRNA FORMYLTRANSFERASE, MITOCHONDRIAL"/>
    <property type="match status" value="1"/>
</dbReference>
<dbReference type="Pfam" id="PF02911">
    <property type="entry name" value="Formyl_trans_C"/>
    <property type="match status" value="1"/>
</dbReference>
<dbReference type="Pfam" id="PF00551">
    <property type="entry name" value="Formyl_trans_N"/>
    <property type="match status" value="1"/>
</dbReference>
<dbReference type="SUPFAM" id="SSF50486">
    <property type="entry name" value="FMT C-terminal domain-like"/>
    <property type="match status" value="1"/>
</dbReference>
<dbReference type="SUPFAM" id="SSF53328">
    <property type="entry name" value="Formyltransferase"/>
    <property type="match status" value="1"/>
</dbReference>
<dbReference type="PROSITE" id="PS00373">
    <property type="entry name" value="GART"/>
    <property type="match status" value="1"/>
</dbReference>
<comment type="function">
    <text evidence="1">Attaches a formyl group to the free amino group of methionyl-tRNA(fMet). The formyl group appears to play a dual role in the initiator identity of N-formylmethionyl-tRNA by promoting its recognition by IF2 and preventing the misappropriation of this tRNA by the elongation apparatus.</text>
</comment>
<comment type="catalytic activity">
    <reaction evidence="1">
        <text>L-methionyl-tRNA(fMet) + (6R)-10-formyltetrahydrofolate = N-formyl-L-methionyl-tRNA(fMet) + (6S)-5,6,7,8-tetrahydrofolate + H(+)</text>
        <dbReference type="Rhea" id="RHEA:24380"/>
        <dbReference type="Rhea" id="RHEA-COMP:9952"/>
        <dbReference type="Rhea" id="RHEA-COMP:9953"/>
        <dbReference type="ChEBI" id="CHEBI:15378"/>
        <dbReference type="ChEBI" id="CHEBI:57453"/>
        <dbReference type="ChEBI" id="CHEBI:78530"/>
        <dbReference type="ChEBI" id="CHEBI:78844"/>
        <dbReference type="ChEBI" id="CHEBI:195366"/>
        <dbReference type="EC" id="2.1.2.9"/>
    </reaction>
</comment>
<comment type="similarity">
    <text evidence="1">Belongs to the Fmt family.</text>
</comment>
<reference key="1">
    <citation type="journal article" date="2005" name="J. Infect. Dis.">
        <title>Genome sequence of a serotype M28 strain of group A Streptococcus: potential new insights into puerperal sepsis and bacterial disease specificity.</title>
        <authorList>
            <person name="Green N.M."/>
            <person name="Zhang S."/>
            <person name="Porcella S.F."/>
            <person name="Nagiec M.J."/>
            <person name="Barbian K.D."/>
            <person name="Beres S.B."/>
            <person name="Lefebvre R.B."/>
            <person name="Musser J.M."/>
        </authorList>
    </citation>
    <scope>NUCLEOTIDE SEQUENCE [LARGE SCALE GENOMIC DNA]</scope>
    <source>
        <strain>MGAS6180</strain>
    </source>
</reference>